<sequence>MVLLSEIPGGSNGDDPNMNPQELPEELIESIVAPIPRCYYPSLSLLSRAFRHVITSQQLFVTRSGLGFKEPVLYAFIGCTPYTTPRWFILRRSNIPLQLRRLNSLPHMFPGAAVVTIGYKIYVMGGYNYQPVSTVIIIDCRFHTWHYLQDMQRARYHATPGVIDGRIYVIGGRKKQDADWVEVFDVTTESWETVPTQCPNEASENGLFVTYAVMQGRILGVFLLTNQDKVYGSHWELYVS</sequence>
<name>FBK41_ARATH</name>
<gene>
    <name type="ordered locus">At2g29860</name>
    <name type="ORF">T27A16.4</name>
</gene>
<organism>
    <name type="scientific">Arabidopsis thaliana</name>
    <name type="common">Mouse-ear cress</name>
    <dbReference type="NCBI Taxonomy" id="3702"/>
    <lineage>
        <taxon>Eukaryota</taxon>
        <taxon>Viridiplantae</taxon>
        <taxon>Streptophyta</taxon>
        <taxon>Embryophyta</taxon>
        <taxon>Tracheophyta</taxon>
        <taxon>Spermatophyta</taxon>
        <taxon>Magnoliopsida</taxon>
        <taxon>eudicotyledons</taxon>
        <taxon>Gunneridae</taxon>
        <taxon>Pentapetalae</taxon>
        <taxon>rosids</taxon>
        <taxon>malvids</taxon>
        <taxon>Brassicales</taxon>
        <taxon>Brassicaceae</taxon>
        <taxon>Camelineae</taxon>
        <taxon>Arabidopsis</taxon>
    </lineage>
</organism>
<proteinExistence type="predicted"/>
<reference key="1">
    <citation type="journal article" date="1999" name="Nature">
        <title>Sequence and analysis of chromosome 2 of the plant Arabidopsis thaliana.</title>
        <authorList>
            <person name="Lin X."/>
            <person name="Kaul S."/>
            <person name="Rounsley S.D."/>
            <person name="Shea T.P."/>
            <person name="Benito M.-I."/>
            <person name="Town C.D."/>
            <person name="Fujii C.Y."/>
            <person name="Mason T.M."/>
            <person name="Bowman C.L."/>
            <person name="Barnstead M.E."/>
            <person name="Feldblyum T.V."/>
            <person name="Buell C.R."/>
            <person name="Ketchum K.A."/>
            <person name="Lee J.J."/>
            <person name="Ronning C.M."/>
            <person name="Koo H.L."/>
            <person name="Moffat K.S."/>
            <person name="Cronin L.A."/>
            <person name="Shen M."/>
            <person name="Pai G."/>
            <person name="Van Aken S."/>
            <person name="Umayam L."/>
            <person name="Tallon L.J."/>
            <person name="Gill J.E."/>
            <person name="Adams M.D."/>
            <person name="Carrera A.J."/>
            <person name="Creasy T.H."/>
            <person name="Goodman H.M."/>
            <person name="Somerville C.R."/>
            <person name="Copenhaver G.P."/>
            <person name="Preuss D."/>
            <person name="Nierman W.C."/>
            <person name="White O."/>
            <person name="Eisen J.A."/>
            <person name="Salzberg S.L."/>
            <person name="Fraser C.M."/>
            <person name="Venter J.C."/>
        </authorList>
    </citation>
    <scope>NUCLEOTIDE SEQUENCE [LARGE SCALE GENOMIC DNA]</scope>
    <source>
        <strain>cv. Columbia</strain>
    </source>
</reference>
<reference key="2">
    <citation type="journal article" date="2017" name="Plant J.">
        <title>Araport11: a complete reannotation of the Arabidopsis thaliana reference genome.</title>
        <authorList>
            <person name="Cheng C.Y."/>
            <person name="Krishnakumar V."/>
            <person name="Chan A.P."/>
            <person name="Thibaud-Nissen F."/>
            <person name="Schobel S."/>
            <person name="Town C.D."/>
        </authorList>
    </citation>
    <scope>GENOME REANNOTATION</scope>
    <source>
        <strain>cv. Columbia</strain>
    </source>
</reference>
<evidence type="ECO:0000256" key="1">
    <source>
        <dbReference type="SAM" id="MobiDB-lite"/>
    </source>
</evidence>
<feature type="chain" id="PRO_0000283201" description="Putative F-box/kelch-repeat protein At2g29860">
    <location>
        <begin position="1"/>
        <end position="240"/>
    </location>
</feature>
<feature type="domain" description="F-box">
    <location>
        <begin position="17"/>
        <end position="63"/>
    </location>
</feature>
<feature type="repeat" description="Kelch 1">
    <location>
        <begin position="120"/>
        <end position="165"/>
    </location>
</feature>
<feature type="repeat" description="Kelch 2">
    <location>
        <begin position="167"/>
        <end position="212"/>
    </location>
</feature>
<feature type="region of interest" description="Disordered" evidence="1">
    <location>
        <begin position="1"/>
        <end position="20"/>
    </location>
</feature>
<dbReference type="EMBL" id="AC005496">
    <property type="protein sequence ID" value="AAC35215.1"/>
    <property type="molecule type" value="Genomic_DNA"/>
</dbReference>
<dbReference type="EMBL" id="CP002685">
    <property type="protein sequence ID" value="AEC08312.1"/>
    <property type="molecule type" value="Genomic_DNA"/>
</dbReference>
<dbReference type="PIR" id="E84701">
    <property type="entry name" value="E84701"/>
</dbReference>
<dbReference type="RefSeq" id="NP_180547.1">
    <property type="nucleotide sequence ID" value="NM_128540.1"/>
</dbReference>
<dbReference type="SMR" id="O82370"/>
<dbReference type="GlyGen" id="O82370">
    <property type="glycosylation" value="1 site"/>
</dbReference>
<dbReference type="PaxDb" id="3702-AT2G29860.1"/>
<dbReference type="EnsemblPlants" id="AT2G29860.1">
    <property type="protein sequence ID" value="AT2G29860.1"/>
    <property type="gene ID" value="AT2G29860"/>
</dbReference>
<dbReference type="GeneID" id="817536"/>
<dbReference type="Gramene" id="AT2G29860.1">
    <property type="protein sequence ID" value="AT2G29860.1"/>
    <property type="gene ID" value="AT2G29860"/>
</dbReference>
<dbReference type="KEGG" id="ath:AT2G29860"/>
<dbReference type="Araport" id="AT2G29860"/>
<dbReference type="TAIR" id="AT2G29860"/>
<dbReference type="eggNOG" id="KOG1072">
    <property type="taxonomic scope" value="Eukaryota"/>
</dbReference>
<dbReference type="HOGENOM" id="CLU_032521_2_0_1"/>
<dbReference type="InParanoid" id="O82370"/>
<dbReference type="OMA" id="CPNEASE"/>
<dbReference type="PhylomeDB" id="O82370"/>
<dbReference type="PRO" id="PR:O82370"/>
<dbReference type="Proteomes" id="UP000006548">
    <property type="component" value="Chromosome 2"/>
</dbReference>
<dbReference type="ExpressionAtlas" id="O82370">
    <property type="expression patterns" value="baseline and differential"/>
</dbReference>
<dbReference type="CDD" id="cd22152">
    <property type="entry name" value="F-box_AtAFR-like"/>
    <property type="match status" value="1"/>
</dbReference>
<dbReference type="Gene3D" id="2.120.10.80">
    <property type="entry name" value="Kelch-type beta propeller"/>
    <property type="match status" value="1"/>
</dbReference>
<dbReference type="InterPro" id="IPR050354">
    <property type="entry name" value="F-box/kelch-repeat_ARATH"/>
</dbReference>
<dbReference type="InterPro" id="IPR001810">
    <property type="entry name" value="F-box_dom"/>
</dbReference>
<dbReference type="InterPro" id="IPR015915">
    <property type="entry name" value="Kelch-typ_b-propeller"/>
</dbReference>
<dbReference type="InterPro" id="IPR006652">
    <property type="entry name" value="Kelch_1"/>
</dbReference>
<dbReference type="PANTHER" id="PTHR24414:SF65">
    <property type="entry name" value="F-BOX DOMAIN-CONTAINING PROTEIN"/>
    <property type="match status" value="1"/>
</dbReference>
<dbReference type="PANTHER" id="PTHR24414">
    <property type="entry name" value="F-BOX/KELCH-REPEAT PROTEIN SKIP4"/>
    <property type="match status" value="1"/>
</dbReference>
<dbReference type="Pfam" id="PF00646">
    <property type="entry name" value="F-box"/>
    <property type="match status" value="1"/>
</dbReference>
<dbReference type="Pfam" id="PF25210">
    <property type="entry name" value="Kelch_FKB95"/>
    <property type="match status" value="1"/>
</dbReference>
<dbReference type="SMART" id="SM00612">
    <property type="entry name" value="Kelch"/>
    <property type="match status" value="2"/>
</dbReference>
<dbReference type="SUPFAM" id="SSF117281">
    <property type="entry name" value="Kelch motif"/>
    <property type="match status" value="1"/>
</dbReference>
<keyword id="KW-0880">Kelch repeat</keyword>
<keyword id="KW-1185">Reference proteome</keyword>
<keyword id="KW-0677">Repeat</keyword>
<protein>
    <recommendedName>
        <fullName>Putative F-box/kelch-repeat protein At2g29860</fullName>
    </recommendedName>
</protein>
<accession>O82370</accession>